<protein>
    <recommendedName>
        <fullName evidence="1">sn-glycerol-3-phosphate transport system permease protein UgpE</fullName>
    </recommendedName>
</protein>
<comment type="function">
    <text evidence="1">Part of the ABC transporter complex UgpBAEC involved in sn-glycerol-3-phosphate (G3P) import. Probably responsible for the translocation of the substrate across the membrane.</text>
</comment>
<comment type="subunit">
    <text evidence="1">The complex is composed of two ATP-binding proteins (UgpC), two transmembrane proteins (UgpA and UgpE) and a solute-binding protein (UgpB).</text>
</comment>
<comment type="subcellular location">
    <subcellularLocation>
        <location evidence="1">Cell inner membrane</location>
        <topology evidence="2">Multi-pass membrane protein</topology>
    </subcellularLocation>
</comment>
<comment type="similarity">
    <text evidence="4">Belongs to the binding-protein-dependent transport system permease family. UgpAE subfamily.</text>
</comment>
<reference key="1">
    <citation type="journal article" date="2001" name="Nature">
        <title>Complete genome sequence of Salmonella enterica serovar Typhimurium LT2.</title>
        <authorList>
            <person name="McClelland M."/>
            <person name="Sanderson K.E."/>
            <person name="Spieth J."/>
            <person name="Clifton S.W."/>
            <person name="Latreille P."/>
            <person name="Courtney L."/>
            <person name="Porwollik S."/>
            <person name="Ali J."/>
            <person name="Dante M."/>
            <person name="Du F."/>
            <person name="Hou S."/>
            <person name="Layman D."/>
            <person name="Leonard S."/>
            <person name="Nguyen C."/>
            <person name="Scott K."/>
            <person name="Holmes A."/>
            <person name="Grewal N."/>
            <person name="Mulvaney E."/>
            <person name="Ryan E."/>
            <person name="Sun H."/>
            <person name="Florea L."/>
            <person name="Miller W."/>
            <person name="Stoneking T."/>
            <person name="Nhan M."/>
            <person name="Waterston R."/>
            <person name="Wilson R.K."/>
        </authorList>
    </citation>
    <scope>NUCLEOTIDE SEQUENCE [LARGE SCALE GENOMIC DNA]</scope>
    <source>
        <strain>LT2 / SGSC1412 / ATCC 700720</strain>
    </source>
</reference>
<dbReference type="EMBL" id="AE006468">
    <property type="protein sequence ID" value="AAL22415.1"/>
    <property type="molecule type" value="Genomic_DNA"/>
</dbReference>
<dbReference type="RefSeq" id="NP_462456.1">
    <property type="nucleotide sequence ID" value="NC_003197.2"/>
</dbReference>
<dbReference type="RefSeq" id="WP_000572196.1">
    <property type="nucleotide sequence ID" value="NC_003197.2"/>
</dbReference>
<dbReference type="SMR" id="Q8ZLF3"/>
<dbReference type="STRING" id="99287.STM3555"/>
<dbReference type="PaxDb" id="99287-STM3555"/>
<dbReference type="GeneID" id="1255078"/>
<dbReference type="KEGG" id="stm:STM3555"/>
<dbReference type="PATRIC" id="fig|99287.12.peg.3758"/>
<dbReference type="HOGENOM" id="CLU_016047_1_1_6"/>
<dbReference type="OMA" id="FIAWNDF"/>
<dbReference type="PhylomeDB" id="Q8ZLF3"/>
<dbReference type="BioCyc" id="SENT99287:STM3555-MONOMER"/>
<dbReference type="Proteomes" id="UP000001014">
    <property type="component" value="Chromosome"/>
</dbReference>
<dbReference type="GO" id="GO:0005886">
    <property type="term" value="C:plasma membrane"/>
    <property type="evidence" value="ECO:0007669"/>
    <property type="project" value="UniProtKB-SubCell"/>
</dbReference>
<dbReference type="GO" id="GO:0055085">
    <property type="term" value="P:transmembrane transport"/>
    <property type="evidence" value="ECO:0007669"/>
    <property type="project" value="InterPro"/>
</dbReference>
<dbReference type="CDD" id="cd06261">
    <property type="entry name" value="TM_PBP2"/>
    <property type="match status" value="1"/>
</dbReference>
<dbReference type="FunFam" id="1.10.3720.10:FF:000042">
    <property type="entry name" value="sn-glycerol-3-phosphate transport system permease protein UgpE"/>
    <property type="match status" value="1"/>
</dbReference>
<dbReference type="Gene3D" id="1.10.3720.10">
    <property type="entry name" value="MetI-like"/>
    <property type="match status" value="1"/>
</dbReference>
<dbReference type="InterPro" id="IPR000515">
    <property type="entry name" value="MetI-like"/>
</dbReference>
<dbReference type="InterPro" id="IPR035906">
    <property type="entry name" value="MetI-like_sf"/>
</dbReference>
<dbReference type="NCBIfam" id="NF008210">
    <property type="entry name" value="PRK10973.1"/>
    <property type="match status" value="1"/>
</dbReference>
<dbReference type="PANTHER" id="PTHR43744">
    <property type="entry name" value="ABC TRANSPORTER PERMEASE PROTEIN MG189-RELATED-RELATED"/>
    <property type="match status" value="1"/>
</dbReference>
<dbReference type="PANTHER" id="PTHR43744:SF8">
    <property type="entry name" value="SN-GLYCEROL-3-PHOSPHATE TRANSPORT SYSTEM PERMEASE PROTEIN UGPE"/>
    <property type="match status" value="1"/>
</dbReference>
<dbReference type="Pfam" id="PF00528">
    <property type="entry name" value="BPD_transp_1"/>
    <property type="match status" value="1"/>
</dbReference>
<dbReference type="SUPFAM" id="SSF161098">
    <property type="entry name" value="MetI-like"/>
    <property type="match status" value="1"/>
</dbReference>
<dbReference type="PROSITE" id="PS50928">
    <property type="entry name" value="ABC_TM1"/>
    <property type="match status" value="1"/>
</dbReference>
<name>UGPE_SALTY</name>
<evidence type="ECO:0000250" key="1">
    <source>
        <dbReference type="UniProtKB" id="P10906"/>
    </source>
</evidence>
<evidence type="ECO:0000255" key="2"/>
<evidence type="ECO:0000255" key="3">
    <source>
        <dbReference type="PROSITE-ProRule" id="PRU00441"/>
    </source>
</evidence>
<evidence type="ECO:0000305" key="4"/>
<keyword id="KW-0997">Cell inner membrane</keyword>
<keyword id="KW-1003">Cell membrane</keyword>
<keyword id="KW-0472">Membrane</keyword>
<keyword id="KW-1185">Reference proteome</keyword>
<keyword id="KW-0812">Transmembrane</keyword>
<keyword id="KW-1133">Transmembrane helix</keyword>
<keyword id="KW-0813">Transport</keyword>
<organism>
    <name type="scientific">Salmonella typhimurium (strain LT2 / SGSC1412 / ATCC 700720)</name>
    <dbReference type="NCBI Taxonomy" id="99287"/>
    <lineage>
        <taxon>Bacteria</taxon>
        <taxon>Pseudomonadati</taxon>
        <taxon>Pseudomonadota</taxon>
        <taxon>Gammaproteobacteria</taxon>
        <taxon>Enterobacterales</taxon>
        <taxon>Enterobacteriaceae</taxon>
        <taxon>Salmonella</taxon>
    </lineage>
</organism>
<proteinExistence type="inferred from homology"/>
<gene>
    <name type="primary">ugpE</name>
    <name type="ordered locus">STM3555</name>
</gene>
<accession>Q8ZLF3</accession>
<feature type="chain" id="PRO_0000292684" description="sn-glycerol-3-phosphate transport system permease protein UgpE">
    <location>
        <begin position="1"/>
        <end position="281"/>
    </location>
</feature>
<feature type="transmembrane region" description="Helical" evidence="3">
    <location>
        <begin position="16"/>
        <end position="36"/>
    </location>
</feature>
<feature type="transmembrane region" description="Helical" evidence="3">
    <location>
        <begin position="85"/>
        <end position="105"/>
    </location>
</feature>
<feature type="transmembrane region" description="Helical" evidence="3">
    <location>
        <begin position="113"/>
        <end position="133"/>
    </location>
</feature>
<feature type="transmembrane region" description="Helical" evidence="3">
    <location>
        <begin position="142"/>
        <end position="162"/>
    </location>
</feature>
<feature type="transmembrane region" description="Helical" evidence="3">
    <location>
        <begin position="202"/>
        <end position="222"/>
    </location>
</feature>
<feature type="transmembrane region" description="Helical" evidence="3">
    <location>
        <begin position="247"/>
        <end position="267"/>
    </location>
</feature>
<feature type="domain" description="ABC transmembrane type-1" evidence="3">
    <location>
        <begin position="77"/>
        <end position="268"/>
    </location>
</feature>
<sequence length="281" mass="31431">MIENRRGLTIFSHTMLILGIAVILFPLYVAFVAATLDDRAVFETPMTLLPGTQLLENIKTIWVNGVGVNSAPFWLMMLNSFIMAFSITVGKITVSMLSAFAIVWFRFPLRNLFFWMIFITLMLPVEVRIFPTVEVIANLKMLDSYAGLTLPLMASATATFLFRQFFMTLPDELVEAARIDGASPMRFFRDIVLPLSKTNLAALFVITFIYGWNQYLWPLLIITDVNLGTAVAGIKGMIATGEGTTQWNQVMAAMLLTLIPPVVIVLAMQRAFVRGLVDSEK</sequence>